<dbReference type="EMBL" id="AE014297">
    <property type="protein sequence ID" value="AAF54310.2"/>
    <property type="molecule type" value="Genomic_DNA"/>
</dbReference>
<dbReference type="EMBL" id="AE014297">
    <property type="protein sequence ID" value="AGB95775.1"/>
    <property type="molecule type" value="Genomic_DNA"/>
</dbReference>
<dbReference type="EMBL" id="BT029287">
    <property type="protein sequence ID" value="ABK30924.1"/>
    <property type="molecule type" value="mRNA"/>
</dbReference>
<dbReference type="EMBL" id="BT053754">
    <property type="protein sequence ID" value="ACK77672.1"/>
    <property type="status" value="ALT_SEQ"/>
    <property type="molecule type" value="mRNA"/>
</dbReference>
<dbReference type="EMBL" id="BT150203">
    <property type="protein sequence ID" value="AGT59571.1"/>
    <property type="molecule type" value="mRNA"/>
</dbReference>
<dbReference type="RefSeq" id="NP_001262393.1">
    <property type="nucleotide sequence ID" value="NM_001275464.1"/>
</dbReference>
<dbReference type="RefSeq" id="NP_649848.2">
    <property type="nucleotide sequence ID" value="NM_141591.3"/>
</dbReference>
<dbReference type="SMR" id="Q9VHJ6"/>
<dbReference type="FunCoup" id="Q9VHJ6">
    <property type="interactions" value="160"/>
</dbReference>
<dbReference type="IntAct" id="Q9VHJ6">
    <property type="interactions" value="1"/>
</dbReference>
<dbReference type="STRING" id="7227.FBpp0306438"/>
<dbReference type="PaxDb" id="7227-FBpp0081492"/>
<dbReference type="EnsemblMetazoa" id="FBtr0082014">
    <property type="protein sequence ID" value="FBpp0081492"/>
    <property type="gene ID" value="FBgn0286204"/>
</dbReference>
<dbReference type="EnsemblMetazoa" id="FBtr0334329">
    <property type="protein sequence ID" value="FBpp0306438"/>
    <property type="gene ID" value="FBgn0286204"/>
</dbReference>
<dbReference type="GeneID" id="41069"/>
<dbReference type="KEGG" id="dme:Dmel_CG11966"/>
<dbReference type="UCSC" id="CG11966-RA">
    <property type="organism name" value="d. melanogaster"/>
</dbReference>
<dbReference type="AGR" id="FB:FBgn0286204"/>
<dbReference type="CTD" id="41069"/>
<dbReference type="FlyBase" id="FBgn0286204">
    <property type="gene designation" value="ich"/>
</dbReference>
<dbReference type="VEuPathDB" id="VectorBase:FBgn0286204"/>
<dbReference type="eggNOG" id="KOG1721">
    <property type="taxonomic scope" value="Eukaryota"/>
</dbReference>
<dbReference type="HOGENOM" id="CLU_023063_0_0_1"/>
<dbReference type="InParanoid" id="Q9VHJ6"/>
<dbReference type="OMA" id="YCNELSA"/>
<dbReference type="OrthoDB" id="6077919at2759"/>
<dbReference type="PhylomeDB" id="Q9VHJ6"/>
<dbReference type="BioGRID-ORCS" id="41069">
    <property type="hits" value="0 hits in 1 CRISPR screen"/>
</dbReference>
<dbReference type="GenomeRNAi" id="41069"/>
<dbReference type="PRO" id="PR:Q9VHJ6"/>
<dbReference type="Proteomes" id="UP000000803">
    <property type="component" value="Chromosome 3R"/>
</dbReference>
<dbReference type="Bgee" id="FBgn0286204">
    <property type="expression patterns" value="Expressed in epipharynx (Drosophila) and 17 other cell types or tissues"/>
</dbReference>
<dbReference type="GO" id="GO:0005634">
    <property type="term" value="C:nucleus"/>
    <property type="evidence" value="ECO:0000315"/>
    <property type="project" value="UniProtKB"/>
</dbReference>
<dbReference type="GO" id="GO:0001228">
    <property type="term" value="F:DNA-binding transcription activator activity, RNA polymerase II-specific"/>
    <property type="evidence" value="ECO:0000318"/>
    <property type="project" value="GO_Central"/>
</dbReference>
<dbReference type="GO" id="GO:0000978">
    <property type="term" value="F:RNA polymerase II cis-regulatory region sequence-specific DNA binding"/>
    <property type="evidence" value="ECO:0000318"/>
    <property type="project" value="GO_Central"/>
</dbReference>
<dbReference type="GO" id="GO:0008270">
    <property type="term" value="F:zinc ion binding"/>
    <property type="evidence" value="ECO:0007669"/>
    <property type="project" value="UniProtKB-KW"/>
</dbReference>
<dbReference type="GO" id="GO:1901148">
    <property type="term" value="P:gene expression involved in extracellular matrix organization"/>
    <property type="evidence" value="ECO:0000315"/>
    <property type="project" value="UniProtKB"/>
</dbReference>
<dbReference type="GO" id="GO:0035149">
    <property type="term" value="P:lumen formation, open tracheal system"/>
    <property type="evidence" value="ECO:0000315"/>
    <property type="project" value="UniProtKB"/>
</dbReference>
<dbReference type="GO" id="GO:0000122">
    <property type="term" value="P:negative regulation of transcription by RNA polymerase II"/>
    <property type="evidence" value="ECO:0000250"/>
    <property type="project" value="FlyBase"/>
</dbReference>
<dbReference type="GO" id="GO:0010628">
    <property type="term" value="P:positive regulation of gene expression"/>
    <property type="evidence" value="ECO:0000315"/>
    <property type="project" value="UniProtKB"/>
</dbReference>
<dbReference type="GO" id="GO:0045944">
    <property type="term" value="P:positive regulation of transcription by RNA polymerase II"/>
    <property type="evidence" value="ECO:0000250"/>
    <property type="project" value="FlyBase"/>
</dbReference>
<dbReference type="GO" id="GO:0006357">
    <property type="term" value="P:regulation of transcription by RNA polymerase II"/>
    <property type="evidence" value="ECO:0000318"/>
    <property type="project" value="GO_Central"/>
</dbReference>
<dbReference type="GO" id="GO:0060439">
    <property type="term" value="P:trachea morphogenesis"/>
    <property type="evidence" value="ECO:0000315"/>
    <property type="project" value="UniProtKB"/>
</dbReference>
<dbReference type="FunFam" id="3.30.160.60:FF:001499">
    <property type="entry name" value="Zinc finger protein"/>
    <property type="match status" value="1"/>
</dbReference>
<dbReference type="FunFam" id="3.30.160.60:FF:001385">
    <property type="entry name" value="zinc finger protein 774"/>
    <property type="match status" value="1"/>
</dbReference>
<dbReference type="Gene3D" id="3.30.160.60">
    <property type="entry name" value="Classic Zinc Finger"/>
    <property type="match status" value="2"/>
</dbReference>
<dbReference type="InterPro" id="IPR050717">
    <property type="entry name" value="C2H2-ZF_Transcription_Reg"/>
</dbReference>
<dbReference type="InterPro" id="IPR036236">
    <property type="entry name" value="Znf_C2H2_sf"/>
</dbReference>
<dbReference type="InterPro" id="IPR013087">
    <property type="entry name" value="Znf_C2H2_type"/>
</dbReference>
<dbReference type="PANTHER" id="PTHR14196:SF10">
    <property type="entry name" value="C2H2-TYPE DOMAIN-CONTAINING PROTEIN"/>
    <property type="match status" value="1"/>
</dbReference>
<dbReference type="PANTHER" id="PTHR14196">
    <property type="entry name" value="ODD-SKIPPED - RELATED"/>
    <property type="match status" value="1"/>
</dbReference>
<dbReference type="Pfam" id="PF00096">
    <property type="entry name" value="zf-C2H2"/>
    <property type="match status" value="2"/>
</dbReference>
<dbReference type="SMART" id="SM00355">
    <property type="entry name" value="ZnF_C2H2"/>
    <property type="match status" value="2"/>
</dbReference>
<dbReference type="SUPFAM" id="SSF57667">
    <property type="entry name" value="beta-beta-alpha zinc fingers"/>
    <property type="match status" value="1"/>
</dbReference>
<dbReference type="PROSITE" id="PS00028">
    <property type="entry name" value="ZINC_FINGER_C2H2_1"/>
    <property type="match status" value="2"/>
</dbReference>
<dbReference type="PROSITE" id="PS50157">
    <property type="entry name" value="ZINC_FINGER_C2H2_2"/>
    <property type="match status" value="2"/>
</dbReference>
<evidence type="ECO:0000255" key="1">
    <source>
        <dbReference type="PROSITE-ProRule" id="PRU00042"/>
    </source>
</evidence>
<evidence type="ECO:0000256" key="2">
    <source>
        <dbReference type="SAM" id="MobiDB-lite"/>
    </source>
</evidence>
<evidence type="ECO:0000269" key="3">
    <source>
    </source>
</evidence>
<evidence type="ECO:0000303" key="4">
    <source>
    </source>
</evidence>
<evidence type="ECO:0000305" key="5"/>
<evidence type="ECO:0000312" key="6">
    <source>
        <dbReference type="EMBL" id="ABK30924.1"/>
    </source>
</evidence>
<evidence type="ECO:0000312" key="7">
    <source>
        <dbReference type="EMBL" id="ACK77672.1"/>
    </source>
</evidence>
<evidence type="ECO:0000312" key="8">
    <source>
        <dbReference type="EMBL" id="AGT59571.1"/>
    </source>
</evidence>
<evidence type="ECO:0000312" key="9">
    <source>
        <dbReference type="FlyBase" id="FBgn0286204"/>
    </source>
</evidence>
<evidence type="ECO:0000312" key="10">
    <source>
        <dbReference type="Proteomes" id="UP000000803"/>
    </source>
</evidence>
<feature type="chain" id="PRO_0000444696" description="Ichor" evidence="5">
    <location>
        <begin position="1"/>
        <end position="592"/>
    </location>
</feature>
<feature type="zinc finger region" description="C2H2-type 1" evidence="1">
    <location>
        <begin position="536"/>
        <end position="558"/>
    </location>
</feature>
<feature type="zinc finger region" description="C2H2-type 2" evidence="1">
    <location>
        <begin position="564"/>
        <end position="586"/>
    </location>
</feature>
<feature type="region of interest" description="Disordered" evidence="2">
    <location>
        <begin position="114"/>
        <end position="156"/>
    </location>
</feature>
<feature type="region of interest" description="Disordered" evidence="2">
    <location>
        <begin position="343"/>
        <end position="377"/>
    </location>
</feature>
<feature type="region of interest" description="Disordered" evidence="2">
    <location>
        <begin position="416"/>
        <end position="439"/>
    </location>
</feature>
<feature type="region of interest" description="Disordered" evidence="2">
    <location>
        <begin position="459"/>
        <end position="527"/>
    </location>
</feature>
<feature type="compositionally biased region" description="Polar residues" evidence="2">
    <location>
        <begin position="114"/>
        <end position="123"/>
    </location>
</feature>
<feature type="compositionally biased region" description="Low complexity" evidence="2">
    <location>
        <begin position="124"/>
        <end position="148"/>
    </location>
</feature>
<feature type="compositionally biased region" description="Gly residues" evidence="2">
    <location>
        <begin position="356"/>
        <end position="369"/>
    </location>
</feature>
<feature type="compositionally biased region" description="Polar residues" evidence="2">
    <location>
        <begin position="459"/>
        <end position="469"/>
    </location>
</feature>
<feature type="compositionally biased region" description="Low complexity" evidence="2">
    <location>
        <begin position="488"/>
        <end position="500"/>
    </location>
</feature>
<feature type="compositionally biased region" description="Polar residues" evidence="2">
    <location>
        <begin position="507"/>
        <end position="524"/>
    </location>
</feature>
<feature type="mutagenesis site" description="Loss of zinc fingers domains results in defects in cuticle elasticity, reduced sclerotization of the head skeleton and ventral epidermal denticles, and disruption of multiple aspects of tube morphogenesis in terminal cells including seamless tube growth, shape, and integrity." evidence="3">
    <location>
        <begin position="107"/>
        <end position="592"/>
    </location>
</feature>
<feature type="mutagenesis site" description="Probable loss of zinc ion coordination in the second zinc finger results in defects in cuticle elasticity, reduced sclerotization of the head skeleton and ventral epidermal denticles, and disruption of multiple aspects of tube morphogenesis in terminal cells including seamless tube growth, shape, and integrity." evidence="3">
    <original>H</original>
    <variation>Y</variation>
    <location>
        <position position="582"/>
    </location>
</feature>
<feature type="sequence conflict" description="In Ref. 3; ACK77672/ABK30924." evidence="5" ref="3">
    <original>M</original>
    <variation>T</variation>
    <location>
        <position position="19"/>
    </location>
</feature>
<feature type="sequence conflict" description="In Ref. 3; ACK77672/ABK30924." evidence="5" ref="3">
    <original>S</original>
    <variation>G</variation>
    <location>
        <position position="513"/>
    </location>
</feature>
<feature type="sequence conflict" description="In Ref. 3; AGT59571." evidence="5" ref="3">
    <original>Q</original>
    <variation>R</variation>
    <location>
        <position position="584"/>
    </location>
</feature>
<feature type="sequence conflict" description="In Ref. 3; ACK77672/ABK30924/AGT59571." evidence="5" ref="3">
    <original>I</original>
    <variation>M</variation>
    <location>
        <position position="585"/>
    </location>
</feature>
<protein>
    <recommendedName>
        <fullName evidence="4 9">Ichor</fullName>
    </recommendedName>
</protein>
<reference evidence="10" key="1">
    <citation type="journal article" date="2000" name="Science">
        <title>The genome sequence of Drosophila melanogaster.</title>
        <authorList>
            <person name="Adams M.D."/>
            <person name="Celniker S.E."/>
            <person name="Holt R.A."/>
            <person name="Evans C.A."/>
            <person name="Gocayne J.D."/>
            <person name="Amanatides P.G."/>
            <person name="Scherer S.E."/>
            <person name="Li P.W."/>
            <person name="Hoskins R.A."/>
            <person name="Galle R.F."/>
            <person name="George R.A."/>
            <person name="Lewis S.E."/>
            <person name="Richards S."/>
            <person name="Ashburner M."/>
            <person name="Henderson S.N."/>
            <person name="Sutton G.G."/>
            <person name="Wortman J.R."/>
            <person name="Yandell M.D."/>
            <person name="Zhang Q."/>
            <person name="Chen L.X."/>
            <person name="Brandon R.C."/>
            <person name="Rogers Y.-H.C."/>
            <person name="Blazej R.G."/>
            <person name="Champe M."/>
            <person name="Pfeiffer B.D."/>
            <person name="Wan K.H."/>
            <person name="Doyle C."/>
            <person name="Baxter E.G."/>
            <person name="Helt G."/>
            <person name="Nelson C.R."/>
            <person name="Miklos G.L.G."/>
            <person name="Abril J.F."/>
            <person name="Agbayani A."/>
            <person name="An H.-J."/>
            <person name="Andrews-Pfannkoch C."/>
            <person name="Baldwin D."/>
            <person name="Ballew R.M."/>
            <person name="Basu A."/>
            <person name="Baxendale J."/>
            <person name="Bayraktaroglu L."/>
            <person name="Beasley E.M."/>
            <person name="Beeson K.Y."/>
            <person name="Benos P.V."/>
            <person name="Berman B.P."/>
            <person name="Bhandari D."/>
            <person name="Bolshakov S."/>
            <person name="Borkova D."/>
            <person name="Botchan M.R."/>
            <person name="Bouck J."/>
            <person name="Brokstein P."/>
            <person name="Brottier P."/>
            <person name="Burtis K.C."/>
            <person name="Busam D.A."/>
            <person name="Butler H."/>
            <person name="Cadieu E."/>
            <person name="Center A."/>
            <person name="Chandra I."/>
            <person name="Cherry J.M."/>
            <person name="Cawley S."/>
            <person name="Dahlke C."/>
            <person name="Davenport L.B."/>
            <person name="Davies P."/>
            <person name="de Pablos B."/>
            <person name="Delcher A."/>
            <person name="Deng Z."/>
            <person name="Mays A.D."/>
            <person name="Dew I."/>
            <person name="Dietz S.M."/>
            <person name="Dodson K."/>
            <person name="Doup L.E."/>
            <person name="Downes M."/>
            <person name="Dugan-Rocha S."/>
            <person name="Dunkov B.C."/>
            <person name="Dunn P."/>
            <person name="Durbin K.J."/>
            <person name="Evangelista C.C."/>
            <person name="Ferraz C."/>
            <person name="Ferriera S."/>
            <person name="Fleischmann W."/>
            <person name="Fosler C."/>
            <person name="Gabrielian A.E."/>
            <person name="Garg N.S."/>
            <person name="Gelbart W.M."/>
            <person name="Glasser K."/>
            <person name="Glodek A."/>
            <person name="Gong F."/>
            <person name="Gorrell J.H."/>
            <person name="Gu Z."/>
            <person name="Guan P."/>
            <person name="Harris M."/>
            <person name="Harris N.L."/>
            <person name="Harvey D.A."/>
            <person name="Heiman T.J."/>
            <person name="Hernandez J.R."/>
            <person name="Houck J."/>
            <person name="Hostin D."/>
            <person name="Houston K.A."/>
            <person name="Howland T.J."/>
            <person name="Wei M.-H."/>
            <person name="Ibegwam C."/>
            <person name="Jalali M."/>
            <person name="Kalush F."/>
            <person name="Karpen G.H."/>
            <person name="Ke Z."/>
            <person name="Kennison J.A."/>
            <person name="Ketchum K.A."/>
            <person name="Kimmel B.E."/>
            <person name="Kodira C.D."/>
            <person name="Kraft C.L."/>
            <person name="Kravitz S."/>
            <person name="Kulp D."/>
            <person name="Lai Z."/>
            <person name="Lasko P."/>
            <person name="Lei Y."/>
            <person name="Levitsky A.A."/>
            <person name="Li J.H."/>
            <person name="Li Z."/>
            <person name="Liang Y."/>
            <person name="Lin X."/>
            <person name="Liu X."/>
            <person name="Mattei B."/>
            <person name="McIntosh T.C."/>
            <person name="McLeod M.P."/>
            <person name="McPherson D."/>
            <person name="Merkulov G."/>
            <person name="Milshina N.V."/>
            <person name="Mobarry C."/>
            <person name="Morris J."/>
            <person name="Moshrefi A."/>
            <person name="Mount S.M."/>
            <person name="Moy M."/>
            <person name="Murphy B."/>
            <person name="Murphy L."/>
            <person name="Muzny D.M."/>
            <person name="Nelson D.L."/>
            <person name="Nelson D.R."/>
            <person name="Nelson K.A."/>
            <person name="Nixon K."/>
            <person name="Nusskern D.R."/>
            <person name="Pacleb J.M."/>
            <person name="Palazzolo M."/>
            <person name="Pittman G.S."/>
            <person name="Pan S."/>
            <person name="Pollard J."/>
            <person name="Puri V."/>
            <person name="Reese M.G."/>
            <person name="Reinert K."/>
            <person name="Remington K."/>
            <person name="Saunders R.D.C."/>
            <person name="Scheeler F."/>
            <person name="Shen H."/>
            <person name="Shue B.C."/>
            <person name="Siden-Kiamos I."/>
            <person name="Simpson M."/>
            <person name="Skupski M.P."/>
            <person name="Smith T.J."/>
            <person name="Spier E."/>
            <person name="Spradling A.C."/>
            <person name="Stapleton M."/>
            <person name="Strong R."/>
            <person name="Sun E."/>
            <person name="Svirskas R."/>
            <person name="Tector C."/>
            <person name="Turner R."/>
            <person name="Venter E."/>
            <person name="Wang A.H."/>
            <person name="Wang X."/>
            <person name="Wang Z.-Y."/>
            <person name="Wassarman D.A."/>
            <person name="Weinstock G.M."/>
            <person name="Weissenbach J."/>
            <person name="Williams S.M."/>
            <person name="Woodage T."/>
            <person name="Worley K.C."/>
            <person name="Wu D."/>
            <person name="Yang S."/>
            <person name="Yao Q.A."/>
            <person name="Ye J."/>
            <person name="Yeh R.-F."/>
            <person name="Zaveri J.S."/>
            <person name="Zhan M."/>
            <person name="Zhang G."/>
            <person name="Zhao Q."/>
            <person name="Zheng L."/>
            <person name="Zheng X.H."/>
            <person name="Zhong F.N."/>
            <person name="Zhong W."/>
            <person name="Zhou X."/>
            <person name="Zhu S.C."/>
            <person name="Zhu X."/>
            <person name="Smith H.O."/>
            <person name="Gibbs R.A."/>
            <person name="Myers E.W."/>
            <person name="Rubin G.M."/>
            <person name="Venter J.C."/>
        </authorList>
    </citation>
    <scope>NUCLEOTIDE SEQUENCE [LARGE SCALE GENOMIC DNA]</scope>
    <source>
        <strain evidence="10">Berkeley</strain>
    </source>
</reference>
<reference evidence="10" key="2">
    <citation type="journal article" date="2002" name="Genome Biol.">
        <title>Annotation of the Drosophila melanogaster euchromatic genome: a systematic review.</title>
        <authorList>
            <person name="Misra S."/>
            <person name="Crosby M.A."/>
            <person name="Mungall C.J."/>
            <person name="Matthews B.B."/>
            <person name="Campbell K.S."/>
            <person name="Hradecky P."/>
            <person name="Huang Y."/>
            <person name="Kaminker J.S."/>
            <person name="Millburn G.H."/>
            <person name="Prochnik S.E."/>
            <person name="Smith C.D."/>
            <person name="Tupy J.L."/>
            <person name="Whitfield E.J."/>
            <person name="Bayraktaroglu L."/>
            <person name="Berman B.P."/>
            <person name="Bettencourt B.R."/>
            <person name="Celniker S.E."/>
            <person name="de Grey A.D.N.J."/>
            <person name="Drysdale R.A."/>
            <person name="Harris N.L."/>
            <person name="Richter J."/>
            <person name="Russo S."/>
            <person name="Schroeder A.J."/>
            <person name="Shu S.Q."/>
            <person name="Stapleton M."/>
            <person name="Yamada C."/>
            <person name="Ashburner M."/>
            <person name="Gelbart W.M."/>
            <person name="Rubin G.M."/>
            <person name="Lewis S.E."/>
        </authorList>
    </citation>
    <scope>GENOME REANNOTATION</scope>
    <source>
        <strain evidence="10">Berkeley</strain>
    </source>
</reference>
<reference evidence="6 7 8" key="3">
    <citation type="submission" date="2013-08" db="EMBL/GenBank/DDBJ databases">
        <authorList>
            <person name="Carlson J."/>
            <person name="Booth B."/>
            <person name="Carlson J."/>
            <person name="Frise E."/>
            <person name="Kapadia B."/>
            <person name="Park S."/>
            <person name="Wan K."/>
            <person name="Yu C."/>
            <person name="Celniker S."/>
        </authorList>
    </citation>
    <scope>NUCLEOTIDE SEQUENCE [LARGE SCALE MRNA]</scope>
    <source>
        <strain evidence="8">Berkeley</strain>
        <tissue evidence="8">Embryo</tissue>
    </source>
</reference>
<reference evidence="5" key="4">
    <citation type="journal article" date="2018" name="PLoS Genet.">
        <title>An Ichor-dependent apical extracellular matrix regulates seamless tube shape and integrity.</title>
        <authorList>
            <person name="Rosa J.B."/>
            <person name="Metzstein M.M."/>
            <person name="Ghabrial A.S."/>
        </authorList>
    </citation>
    <scope>FUNCTION</scope>
    <scope>SUBCELLULAR LOCATION</scope>
    <scope>DEVELOPMENTAL STAGE</scope>
    <scope>DISRUPTION PHENOTYPE</scope>
    <scope>MUTAGENESIS OF 107-GLN--ASP-592 AND HIS-582</scope>
</reference>
<name>ICH_DROME</name>
<accession>Q9VHJ6</accession>
<accession>A0AVW9</accession>
<accession>B7FNR4</accession>
<accession>T1T717</accession>
<keyword id="KW-0010">Activator</keyword>
<keyword id="KW-0238">DNA-binding</keyword>
<keyword id="KW-0479">Metal-binding</keyword>
<keyword id="KW-0539">Nucleus</keyword>
<keyword id="KW-1185">Reference proteome</keyword>
<keyword id="KW-0677">Repeat</keyword>
<keyword id="KW-0804">Transcription</keyword>
<keyword id="KW-0805">Transcription regulation</keyword>
<keyword id="KW-0862">Zinc</keyword>
<keyword id="KW-0863">Zinc-finger</keyword>
<organism evidence="10">
    <name type="scientific">Drosophila melanogaster</name>
    <name type="common">Fruit fly</name>
    <dbReference type="NCBI Taxonomy" id="7227"/>
    <lineage>
        <taxon>Eukaryota</taxon>
        <taxon>Metazoa</taxon>
        <taxon>Ecdysozoa</taxon>
        <taxon>Arthropoda</taxon>
        <taxon>Hexapoda</taxon>
        <taxon>Insecta</taxon>
        <taxon>Pterygota</taxon>
        <taxon>Neoptera</taxon>
        <taxon>Endopterygota</taxon>
        <taxon>Diptera</taxon>
        <taxon>Brachycera</taxon>
        <taxon>Muscomorpha</taxon>
        <taxon>Ephydroidea</taxon>
        <taxon>Drosophilidae</taxon>
        <taxon>Drosophila</taxon>
        <taxon>Sophophora</taxon>
    </lineage>
</organism>
<gene>
    <name evidence="4 9" type="primary">ich</name>
    <name evidence="9" type="ORF">CG11966</name>
</gene>
<comment type="function">
    <text evidence="3">Transcriptional activator. In tracheal terminal cells, regulates the transcription of factors involved in the formation of a mature apical extracellular matrix (aECM) which is essential for the integrity and shape of seamless tubes.</text>
</comment>
<comment type="subcellular location">
    <subcellularLocation>
        <location evidence="3">Nucleus</location>
    </subcellularLocation>
</comment>
<comment type="developmental stage">
    <text evidence="3">Expressed in embryo from stage 10 in all ectodermally-derived epithelia secreting cuticle. During germband retraction, epidermal expression is strongest in the T2, T3, and A8 epidermal parasegments, but not detected during primary branching. Pan-tracheal expression is first detected at stage 14 and continues during later stages coinciding with lumen growth and cuticle deposition. In addition to tracheal expression, expressed in epidermis, foregut, and hindgut.</text>
</comment>
<comment type="disruption phenotype">
    <text evidence="3">Embryonic lethal. RNAi-mediated knockdown in the trachea of first instar larvae results in discontinuous tubes. RNAi-mediated knockdown in the tracheal terminal cells of first instar larva results in lumen devoid of taenidiae and occluded with disorganized electron-dense material, pan-tracheal liquid clearance defect as well as a breaks in the dorsal trunks.</text>
</comment>
<comment type="sequence caution" evidence="5">
    <conflict type="miscellaneous discrepancy">
        <sequence resource="EMBL-CDS" id="ACK77672"/>
    </conflict>
</comment>
<sequence>MKFCSMNGPSESEVESLLMSPCWGPPQTSAQDQYLLDGHKLLLEHDLDSLPSDADQKNSLDVLDNLLLNGSSLNALSDLKPLPPFTGYTGHLSINGISGHHYHAIAQRLPDESNNNYMQSAYHPQNQSNPTSTTQSNGGSNSNSNNSNEHNIVSSSTCLPESVLSGSGGGGGGNDACLADVKLFADSQLDSKLYSVADSCVMNGSGSGSAANGNGSGPSIATLTPIDQVADSLHNSGVRIYKDLTEYVDMNSIDDIAAIIGSAIADTTVPNQLDKDDNNDTRDSWMDLDAWIDGNCIQQESAKVLVSQQDSLGDFILPHSPLPMHASSSTLQSLLSHGYMPLLQNRLQNGPPNGNSSGGGGGANQGAGIKGDPQAPTSTSYCNELAAATSSSCSPPGSVVSTTDNPNGLMINPRYLSNPTNNQATGNLHQQGGYSMQASGLSLKDNGLCSPDLLGNYPHTTTASTTGSEMRTGAPKAKRSRSQKKSNQQQQQQQQQQQQQGDGGGQPTTPQMSAISPSGFSASDLSGLLGKEKPVHRCSICNRGFLNKSNIKVHLRTHTGEKPFRCDVCAKAFRQKAHLLKHQQIHKRIGRD</sequence>
<proteinExistence type="evidence at protein level"/>